<dbReference type="EMBL" id="CU928170">
    <property type="protein sequence ID" value="CAR24499.1"/>
    <property type="molecule type" value="Genomic_DNA"/>
</dbReference>
<dbReference type="RefSeq" id="XP_002554936.1">
    <property type="nucleotide sequence ID" value="XM_002554890.1"/>
</dbReference>
<dbReference type="SMR" id="C5DJL0"/>
<dbReference type="FunCoup" id="C5DJL0">
    <property type="interactions" value="184"/>
</dbReference>
<dbReference type="STRING" id="559295.C5DJL0"/>
<dbReference type="GeneID" id="8293170"/>
<dbReference type="KEGG" id="lth:KLTH0F17292g"/>
<dbReference type="eggNOG" id="KOG4020">
    <property type="taxonomic scope" value="Eukaryota"/>
</dbReference>
<dbReference type="HOGENOM" id="CLU_067152_0_0_1"/>
<dbReference type="InParanoid" id="C5DJL0"/>
<dbReference type="OMA" id="TMITCGK"/>
<dbReference type="OrthoDB" id="311633at2759"/>
<dbReference type="Proteomes" id="UP000002036">
    <property type="component" value="Chromosome F"/>
</dbReference>
<dbReference type="GO" id="GO:0005758">
    <property type="term" value="C:mitochondrial intermembrane space"/>
    <property type="evidence" value="ECO:0007669"/>
    <property type="project" value="UniProtKB-SubCell"/>
</dbReference>
<dbReference type="GO" id="GO:0051537">
    <property type="term" value="F:2 iron, 2 sulfur cluster binding"/>
    <property type="evidence" value="ECO:0007669"/>
    <property type="project" value="UniProtKB-UniRule"/>
</dbReference>
<dbReference type="GO" id="GO:0051539">
    <property type="term" value="F:4 iron, 4 sulfur cluster binding"/>
    <property type="evidence" value="ECO:0007669"/>
    <property type="project" value="UniProtKB-KW"/>
</dbReference>
<dbReference type="GO" id="GO:0009055">
    <property type="term" value="F:electron transfer activity"/>
    <property type="evidence" value="ECO:0007669"/>
    <property type="project" value="UniProtKB-UniRule"/>
</dbReference>
<dbReference type="GO" id="GO:0046872">
    <property type="term" value="F:metal ion binding"/>
    <property type="evidence" value="ECO:0007669"/>
    <property type="project" value="UniProtKB-KW"/>
</dbReference>
<dbReference type="GO" id="GO:0016226">
    <property type="term" value="P:iron-sulfur cluster assembly"/>
    <property type="evidence" value="ECO:0007669"/>
    <property type="project" value="UniProtKB-UniRule"/>
</dbReference>
<dbReference type="Gene3D" id="3.40.50.11000">
    <property type="entry name" value="Fe-S cluster assembly protein Dre2, N-terminal domain"/>
    <property type="match status" value="1"/>
</dbReference>
<dbReference type="HAMAP" id="MF_03115">
    <property type="entry name" value="Anamorsin"/>
    <property type="match status" value="1"/>
</dbReference>
<dbReference type="InterPro" id="IPR007785">
    <property type="entry name" value="Anamorsin"/>
</dbReference>
<dbReference type="InterPro" id="IPR046408">
    <property type="entry name" value="CIAPIN1"/>
</dbReference>
<dbReference type="InterPro" id="IPR031838">
    <property type="entry name" value="Dre2_N"/>
</dbReference>
<dbReference type="PANTHER" id="PTHR13273">
    <property type="entry name" value="ANAMORSIN"/>
    <property type="match status" value="1"/>
</dbReference>
<dbReference type="PANTHER" id="PTHR13273:SF14">
    <property type="entry name" value="ANAMORSIN"/>
    <property type="match status" value="1"/>
</dbReference>
<dbReference type="Pfam" id="PF05093">
    <property type="entry name" value="CIAPIN1"/>
    <property type="match status" value="1"/>
</dbReference>
<dbReference type="Pfam" id="PF16803">
    <property type="entry name" value="DRE2_N"/>
    <property type="match status" value="1"/>
</dbReference>
<keyword id="KW-0001">2Fe-2S</keyword>
<keyword id="KW-0004">4Fe-4S</keyword>
<keyword id="KW-0963">Cytoplasm</keyword>
<keyword id="KW-0408">Iron</keyword>
<keyword id="KW-0411">Iron-sulfur</keyword>
<keyword id="KW-0479">Metal-binding</keyword>
<keyword id="KW-0496">Mitochondrion</keyword>
<keyword id="KW-1185">Reference proteome</keyword>
<proteinExistence type="inferred from homology"/>
<organism>
    <name type="scientific">Lachancea thermotolerans (strain ATCC 56472 / CBS 6340 / NRRL Y-8284)</name>
    <name type="common">Yeast</name>
    <name type="synonym">Kluyveromyces thermotolerans</name>
    <dbReference type="NCBI Taxonomy" id="559295"/>
    <lineage>
        <taxon>Eukaryota</taxon>
        <taxon>Fungi</taxon>
        <taxon>Dikarya</taxon>
        <taxon>Ascomycota</taxon>
        <taxon>Saccharomycotina</taxon>
        <taxon>Saccharomycetes</taxon>
        <taxon>Saccharomycetales</taxon>
        <taxon>Saccharomycetaceae</taxon>
        <taxon>Lachancea</taxon>
    </lineage>
</organism>
<name>DRE2_LACTC</name>
<feature type="chain" id="PRO_0000392391" description="Fe-S cluster assembly protein DRE2">
    <location>
        <begin position="1"/>
        <end position="348"/>
    </location>
</feature>
<feature type="region of interest" description="N-terminal SAM-like domain" evidence="1">
    <location>
        <begin position="1"/>
        <end position="185"/>
    </location>
</feature>
<feature type="region of interest" description="Disordered" evidence="2">
    <location>
        <begin position="128"/>
        <end position="148"/>
    </location>
</feature>
<feature type="region of interest" description="Disordered" evidence="2">
    <location>
        <begin position="162"/>
        <end position="213"/>
    </location>
</feature>
<feature type="region of interest" description="Linker" evidence="1">
    <location>
        <begin position="186"/>
        <end position="241"/>
    </location>
</feature>
<feature type="region of interest" description="Fe-S binding site A" evidence="1">
    <location>
        <begin position="248"/>
        <end position="264"/>
    </location>
</feature>
<feature type="region of interest" description="Fe-S binding site B" evidence="1">
    <location>
        <begin position="311"/>
        <end position="325"/>
    </location>
</feature>
<feature type="short sequence motif" description="Cx2C motif 1" evidence="1">
    <location>
        <begin position="311"/>
        <end position="314"/>
    </location>
</feature>
<feature type="short sequence motif" description="Cx2C motif 2" evidence="1">
    <location>
        <begin position="322"/>
        <end position="325"/>
    </location>
</feature>
<feature type="compositionally biased region" description="Acidic residues" evidence="2">
    <location>
        <begin position="188"/>
        <end position="206"/>
    </location>
</feature>
<feature type="binding site" evidence="1">
    <location>
        <position position="248"/>
    </location>
    <ligand>
        <name>[2Fe-2S] cluster</name>
        <dbReference type="ChEBI" id="CHEBI:190135"/>
    </ligand>
</feature>
<feature type="binding site" evidence="1">
    <location>
        <position position="259"/>
    </location>
    <ligand>
        <name>[2Fe-2S] cluster</name>
        <dbReference type="ChEBI" id="CHEBI:190135"/>
    </ligand>
</feature>
<feature type="binding site" evidence="1">
    <location>
        <position position="262"/>
    </location>
    <ligand>
        <name>[2Fe-2S] cluster</name>
        <dbReference type="ChEBI" id="CHEBI:190135"/>
    </ligand>
</feature>
<feature type="binding site" evidence="1">
    <location>
        <position position="264"/>
    </location>
    <ligand>
        <name>[2Fe-2S] cluster</name>
        <dbReference type="ChEBI" id="CHEBI:190135"/>
    </ligand>
</feature>
<feature type="binding site" evidence="1">
    <location>
        <position position="311"/>
    </location>
    <ligand>
        <name>[4Fe-4S] cluster</name>
        <dbReference type="ChEBI" id="CHEBI:49883"/>
    </ligand>
</feature>
<feature type="binding site" evidence="1">
    <location>
        <position position="314"/>
    </location>
    <ligand>
        <name>[4Fe-4S] cluster</name>
        <dbReference type="ChEBI" id="CHEBI:49883"/>
    </ligand>
</feature>
<feature type="binding site" evidence="1">
    <location>
        <position position="322"/>
    </location>
    <ligand>
        <name>[4Fe-4S] cluster</name>
        <dbReference type="ChEBI" id="CHEBI:49883"/>
    </ligand>
</feature>
<feature type="binding site" evidence="1">
    <location>
        <position position="325"/>
    </location>
    <ligand>
        <name>[4Fe-4S] cluster</name>
        <dbReference type="ChEBI" id="CHEBI:49883"/>
    </ligand>
</feature>
<evidence type="ECO:0000255" key="1">
    <source>
        <dbReference type="HAMAP-Rule" id="MF_03115"/>
    </source>
</evidence>
<evidence type="ECO:0000256" key="2">
    <source>
        <dbReference type="SAM" id="MobiDB-lite"/>
    </source>
</evidence>
<gene>
    <name evidence="1" type="primary">DRE2</name>
    <name type="ordered locus">KLTH0F17292g</name>
</gene>
<sequence length="348" mass="37523">MSGEKSSLLLIHPAVTTTPELVESVKKSNVFADSSKLDQFLVNKLNDSSVQLEDEKYSLVYYLTPEKESEIQFPTKLIAVLAQSLRGGGRLFGLSDVYKIDALINGFEVVNSGEQGYHWVKKGTAHTQTAPVALRPKRNTPSGGSKSLPIFAKPSFALPAFKKAEKPKPTGLPTFKKPESPRASVVAEDLDDGDELDGMNEDDSNSDELTASKSKFFDDVAGQDSADSIDEDDLVDDAEKSAITVVTCGKTKTRRRKACKDCTCGLKEAEAQEADAARAAQDRILGKPVKFDEQELTEIDFTIQGKKVGGCGSCSLGDAFRCSGCPYLGLPAFKPGQPISLDTIADDL</sequence>
<reference key="1">
    <citation type="journal article" date="2009" name="Genome Res.">
        <title>Comparative genomics of protoploid Saccharomycetaceae.</title>
        <authorList>
            <consortium name="The Genolevures Consortium"/>
            <person name="Souciet J.-L."/>
            <person name="Dujon B."/>
            <person name="Gaillardin C."/>
            <person name="Johnston M."/>
            <person name="Baret P.V."/>
            <person name="Cliften P."/>
            <person name="Sherman D.J."/>
            <person name="Weissenbach J."/>
            <person name="Westhof E."/>
            <person name="Wincker P."/>
            <person name="Jubin C."/>
            <person name="Poulain J."/>
            <person name="Barbe V."/>
            <person name="Segurens B."/>
            <person name="Artiguenave F."/>
            <person name="Anthouard V."/>
            <person name="Vacherie B."/>
            <person name="Val M.-E."/>
            <person name="Fulton R.S."/>
            <person name="Minx P."/>
            <person name="Wilson R."/>
            <person name="Durrens P."/>
            <person name="Jean G."/>
            <person name="Marck C."/>
            <person name="Martin T."/>
            <person name="Nikolski M."/>
            <person name="Rolland T."/>
            <person name="Seret M.-L."/>
            <person name="Casaregola S."/>
            <person name="Despons L."/>
            <person name="Fairhead C."/>
            <person name="Fischer G."/>
            <person name="Lafontaine I."/>
            <person name="Leh V."/>
            <person name="Lemaire M."/>
            <person name="de Montigny J."/>
            <person name="Neuveglise C."/>
            <person name="Thierry A."/>
            <person name="Blanc-Lenfle I."/>
            <person name="Bleykasten C."/>
            <person name="Diffels J."/>
            <person name="Fritsch E."/>
            <person name="Frangeul L."/>
            <person name="Goeffon A."/>
            <person name="Jauniaux N."/>
            <person name="Kachouri-Lafond R."/>
            <person name="Payen C."/>
            <person name="Potier S."/>
            <person name="Pribylova L."/>
            <person name="Ozanne C."/>
            <person name="Richard G.-F."/>
            <person name="Sacerdot C."/>
            <person name="Straub M.-L."/>
            <person name="Talla E."/>
        </authorList>
    </citation>
    <scope>NUCLEOTIDE SEQUENCE [LARGE SCALE GENOMIC DNA]</scope>
    <source>
        <strain>ATCC 56472 / CBS 6340 / NRRL Y-8284</strain>
    </source>
</reference>
<accession>C5DJL0</accession>
<protein>
    <recommendedName>
        <fullName evidence="1">Fe-S cluster assembly protein DRE2</fullName>
    </recommendedName>
    <alternativeName>
        <fullName evidence="1">Anamorsin homolog</fullName>
    </alternativeName>
</protein>
<comment type="function">
    <text evidence="1">Component of the cytosolic iron-sulfur (Fe-S) protein assembly (CIA) machinery required for the maturation of extramitochondrial Fe-S proteins. Part of an electron transfer chain functioning in an early step of cytosolic Fe-S biogenesis, facilitating the de novo assembly of a [4Fe-4S] cluster on the scaffold complex CFD1-NBP35. Electrons are transferred to DRE2 from NADPH via the FAD- and FMN-containing protein TAH18. TAH18-DRE2 are also required for the assembly of the diferric tyrosyl radical cofactor of ribonucleotide reductase (RNR), probably by providing electrons for reduction during radical cofactor maturation in the catalytic small subunit RNR2.</text>
</comment>
<comment type="cofactor">
    <cofactor evidence="1">
        <name>[2Fe-2S] cluster</name>
        <dbReference type="ChEBI" id="CHEBI:190135"/>
    </cofactor>
</comment>
<comment type="cofactor">
    <cofactor evidence="1">
        <name>[4Fe-4S] cluster</name>
        <dbReference type="ChEBI" id="CHEBI:49883"/>
    </cofactor>
</comment>
<comment type="subunit">
    <text evidence="1">Monomer. Interacts with TAH18. Interacts with MIA40.</text>
</comment>
<comment type="subcellular location">
    <subcellularLocation>
        <location evidence="1">Cytoplasm</location>
    </subcellularLocation>
    <subcellularLocation>
        <location evidence="1">Mitochondrion intermembrane space</location>
    </subcellularLocation>
</comment>
<comment type="domain">
    <text evidence="1">The C-terminal domain binds 2 Fe-S clusters but is otherwise mostly in an intrinsically disordered conformation.</text>
</comment>
<comment type="domain">
    <text evidence="1">The N-terminal domain has structural similarity with S-adenosyl-L-methionine-dependent methyltransferases, but does not bind S-adenosyl-L-methionine. It is required for correct assembly of the 2 Fe-S clusters.</text>
</comment>
<comment type="domain">
    <text evidence="1">The twin Cx2C motifs are involved in the recognition by the mitochondrial MIA40-ERV1 disulfide relay system. The formation of 2 disulfide bonds in the Cx2C motifs through dithiol/disulfide exchange reactions effectively traps the protein in the mitochondrial intermembrane space.</text>
</comment>
<comment type="similarity">
    <text evidence="1">Belongs to the anamorsin family.</text>
</comment>